<comment type="function">
    <text evidence="1">A core subunit of photosystem II (PSII), probably helps stabilize the reaction center.</text>
</comment>
<comment type="subunit">
    <text evidence="1">PSII is composed of 1 copy each of membrane proteins PsbA, PsbB, PsbC, PsbD, PsbE, PsbF, PsbH, PsbI, PsbJ, PsbK, PsbL, PsbM, PsbT, PsbX, PsbY, PsbZ, Psb30/Ycf12, peripheral proteins of the oxygen-evolving complex and a large number of cofactors. It forms dimeric complexes.</text>
</comment>
<comment type="subcellular location">
    <subcellularLocation>
        <location evidence="1">Plastid</location>
        <location evidence="1">Chloroplast thylakoid membrane</location>
        <topology evidence="1">Single-pass membrane protein</topology>
    </subcellularLocation>
</comment>
<comment type="similarity">
    <text evidence="1">Belongs to the Psb30/Ycf12 family.</text>
</comment>
<geneLocation type="chloroplast"/>
<evidence type="ECO:0000255" key="1">
    <source>
        <dbReference type="HAMAP-Rule" id="MF_01329"/>
    </source>
</evidence>
<name>PSB30_PHATC</name>
<keyword id="KW-0150">Chloroplast</keyword>
<keyword id="KW-0472">Membrane</keyword>
<keyword id="KW-0602">Photosynthesis</keyword>
<keyword id="KW-0604">Photosystem II</keyword>
<keyword id="KW-0934">Plastid</keyword>
<keyword id="KW-1185">Reference proteome</keyword>
<keyword id="KW-0793">Thylakoid</keyword>
<keyword id="KW-0812">Transmembrane</keyword>
<keyword id="KW-1133">Transmembrane helix</keyword>
<dbReference type="EMBL" id="EF067920">
    <property type="protein sequence ID" value="ABK20598.1"/>
    <property type="molecule type" value="Genomic_DNA"/>
</dbReference>
<dbReference type="RefSeq" id="YP_874375.1">
    <property type="nucleotide sequence ID" value="NC_008588.1"/>
</dbReference>
<dbReference type="SMR" id="A0T0L8"/>
<dbReference type="STRING" id="556484.A0T0L8"/>
<dbReference type="GeneID" id="4524617"/>
<dbReference type="InParanoid" id="A0T0L8"/>
<dbReference type="Proteomes" id="UP000000759">
    <property type="component" value="Chloroplast"/>
</dbReference>
<dbReference type="GO" id="GO:0009535">
    <property type="term" value="C:chloroplast thylakoid membrane"/>
    <property type="evidence" value="ECO:0007669"/>
    <property type="project" value="UniProtKB-SubCell"/>
</dbReference>
<dbReference type="GO" id="GO:0009523">
    <property type="term" value="C:photosystem II"/>
    <property type="evidence" value="ECO:0007669"/>
    <property type="project" value="UniProtKB-KW"/>
</dbReference>
<dbReference type="GO" id="GO:0015979">
    <property type="term" value="P:photosynthesis"/>
    <property type="evidence" value="ECO:0007669"/>
    <property type="project" value="UniProtKB-KW"/>
</dbReference>
<dbReference type="HAMAP" id="MF_01329">
    <property type="entry name" value="PSII_Psb30_Ycf12"/>
    <property type="match status" value="1"/>
</dbReference>
<dbReference type="InterPro" id="IPR010284">
    <property type="entry name" value="PSII_Ycf12_core-subunit"/>
</dbReference>
<dbReference type="NCBIfam" id="NF010239">
    <property type="entry name" value="PRK13686.1"/>
    <property type="match status" value="1"/>
</dbReference>
<dbReference type="Pfam" id="PF05969">
    <property type="entry name" value="PSII_Ycf12"/>
    <property type="match status" value="1"/>
</dbReference>
<sequence>MINWQVLGQLIATGTIMLAGPAVIVLLALKKGNL</sequence>
<feature type="chain" id="PRO_0000276561" description="Photosystem II reaction center protein Psb30">
    <location>
        <begin position="1"/>
        <end position="34"/>
    </location>
</feature>
<feature type="transmembrane region" description="Helical" evidence="1">
    <location>
        <begin position="9"/>
        <end position="29"/>
    </location>
</feature>
<gene>
    <name evidence="1" type="primary">psb30</name>
    <name evidence="1" type="synonym">ycf12</name>
</gene>
<protein>
    <recommendedName>
        <fullName evidence="1">Photosystem II reaction center protein Psb30</fullName>
    </recommendedName>
    <alternativeName>
        <fullName evidence="1">Photosystem II reaction center protein Ycf12</fullName>
    </alternativeName>
</protein>
<organism>
    <name type="scientific">Phaeodactylum tricornutum (strain CCAP 1055/1)</name>
    <dbReference type="NCBI Taxonomy" id="556484"/>
    <lineage>
        <taxon>Eukaryota</taxon>
        <taxon>Sar</taxon>
        <taxon>Stramenopiles</taxon>
        <taxon>Ochrophyta</taxon>
        <taxon>Bacillariophyta</taxon>
        <taxon>Bacillariophyceae</taxon>
        <taxon>Bacillariophycidae</taxon>
        <taxon>Naviculales</taxon>
        <taxon>Phaeodactylaceae</taxon>
        <taxon>Phaeodactylum</taxon>
    </lineage>
</organism>
<reference key="1">
    <citation type="journal article" date="2007" name="Mol. Genet. Genomics">
        <title>Chloroplast genomes of the diatoms Phaeodactylum tricornutum and Thalassiosira pseudonana: comparison with other plastid genomes of the red lineage.</title>
        <authorList>
            <person name="Oudot-Le Secq M.-P."/>
            <person name="Grimwood J."/>
            <person name="Shapiro H."/>
            <person name="Armbrust E.V."/>
            <person name="Bowler C."/>
            <person name="Green B.R."/>
        </authorList>
    </citation>
    <scope>NUCLEOTIDE SEQUENCE [LARGE SCALE GENOMIC DNA]</scope>
    <source>
        <strain>CCAP 1055/1</strain>
    </source>
</reference>
<proteinExistence type="inferred from homology"/>
<accession>A0T0L8</accession>